<feature type="chain" id="PRO_0000257060" description="Probable transcriptional regulatory protein Ecaj_0351">
    <location>
        <begin position="1"/>
        <end position="248"/>
    </location>
</feature>
<feature type="region of interest" description="Disordered" evidence="2">
    <location>
        <begin position="1"/>
        <end position="21"/>
    </location>
</feature>
<proteinExistence type="inferred from homology"/>
<keyword id="KW-0963">Cytoplasm</keyword>
<keyword id="KW-0238">DNA-binding</keyword>
<keyword id="KW-0804">Transcription</keyword>
<keyword id="KW-0805">Transcription regulation</keyword>
<sequence length="248" mass="28050">MAGHSQFANIKHRKGAQDAKRAQRFTKLIREIIVSAKQGLPDPEFNSRLRSAIIAAKKENLPKDRIDAAIKSATGNTQSDNYEEVVYEGYGPGNIALMIQTLTNNRNRTAAELRHALSKYNGKLGESGSVSFLFNHVGVIAYKAASIDNFDSLFNIAIELQALDVEETTQDESQEKMYYVTCNVQDFGNVRDQLFNKFSDAEFSRLFWKPSDILKIEDEEIQKKISSLMDLLENNDDVQYIDSNFTFC</sequence>
<dbReference type="EMBL" id="CP000107">
    <property type="protein sequence ID" value="AAZ68394.1"/>
    <property type="molecule type" value="Genomic_DNA"/>
</dbReference>
<dbReference type="RefSeq" id="WP_011304472.1">
    <property type="nucleotide sequence ID" value="NC_007354.1"/>
</dbReference>
<dbReference type="SMR" id="Q3YSB1"/>
<dbReference type="FunCoup" id="Q3YSB1">
    <property type="interactions" value="321"/>
</dbReference>
<dbReference type="STRING" id="269484.Ecaj_0351"/>
<dbReference type="KEGG" id="ecn:Ecaj_0351"/>
<dbReference type="eggNOG" id="COG0217">
    <property type="taxonomic scope" value="Bacteria"/>
</dbReference>
<dbReference type="HOGENOM" id="CLU_062974_2_2_5"/>
<dbReference type="InParanoid" id="Q3YSB1"/>
<dbReference type="Proteomes" id="UP000000435">
    <property type="component" value="Chromosome"/>
</dbReference>
<dbReference type="GO" id="GO:0005737">
    <property type="term" value="C:cytoplasm"/>
    <property type="evidence" value="ECO:0007669"/>
    <property type="project" value="UniProtKB-SubCell"/>
</dbReference>
<dbReference type="GO" id="GO:0003677">
    <property type="term" value="F:DNA binding"/>
    <property type="evidence" value="ECO:0007669"/>
    <property type="project" value="UniProtKB-UniRule"/>
</dbReference>
<dbReference type="GO" id="GO:0006355">
    <property type="term" value="P:regulation of DNA-templated transcription"/>
    <property type="evidence" value="ECO:0007669"/>
    <property type="project" value="UniProtKB-UniRule"/>
</dbReference>
<dbReference type="FunFam" id="1.10.10.200:FF:000002">
    <property type="entry name" value="Probable transcriptional regulatory protein CLM62_37755"/>
    <property type="match status" value="1"/>
</dbReference>
<dbReference type="Gene3D" id="1.10.10.200">
    <property type="match status" value="1"/>
</dbReference>
<dbReference type="Gene3D" id="3.30.70.980">
    <property type="match status" value="2"/>
</dbReference>
<dbReference type="HAMAP" id="MF_00693">
    <property type="entry name" value="Transcrip_reg_TACO1"/>
    <property type="match status" value="1"/>
</dbReference>
<dbReference type="InterPro" id="IPR017856">
    <property type="entry name" value="Integrase-like_N"/>
</dbReference>
<dbReference type="InterPro" id="IPR048300">
    <property type="entry name" value="TACO1_YebC-like_2nd/3rd_dom"/>
</dbReference>
<dbReference type="InterPro" id="IPR049083">
    <property type="entry name" value="TACO1_YebC_N"/>
</dbReference>
<dbReference type="InterPro" id="IPR002876">
    <property type="entry name" value="Transcrip_reg_TACO1-like"/>
</dbReference>
<dbReference type="InterPro" id="IPR026564">
    <property type="entry name" value="Transcrip_reg_TACO1-like_dom3"/>
</dbReference>
<dbReference type="InterPro" id="IPR029072">
    <property type="entry name" value="YebC-like"/>
</dbReference>
<dbReference type="NCBIfam" id="NF001030">
    <property type="entry name" value="PRK00110.1"/>
    <property type="match status" value="1"/>
</dbReference>
<dbReference type="NCBIfam" id="NF009044">
    <property type="entry name" value="PRK12378.1"/>
    <property type="match status" value="1"/>
</dbReference>
<dbReference type="NCBIfam" id="TIGR01033">
    <property type="entry name" value="YebC/PmpR family DNA-binding transcriptional regulator"/>
    <property type="match status" value="1"/>
</dbReference>
<dbReference type="PANTHER" id="PTHR12532:SF11">
    <property type="match status" value="1"/>
</dbReference>
<dbReference type="PANTHER" id="PTHR12532">
    <property type="entry name" value="TRANSLATIONAL ACTIVATOR OF CYTOCHROME C OXIDASE 1"/>
    <property type="match status" value="1"/>
</dbReference>
<dbReference type="Pfam" id="PF20772">
    <property type="entry name" value="TACO1_YebC_N"/>
    <property type="match status" value="1"/>
</dbReference>
<dbReference type="Pfam" id="PF01709">
    <property type="entry name" value="Transcrip_reg"/>
    <property type="match status" value="1"/>
</dbReference>
<dbReference type="SUPFAM" id="SSF75625">
    <property type="entry name" value="YebC-like"/>
    <property type="match status" value="1"/>
</dbReference>
<reference key="1">
    <citation type="journal article" date="2006" name="J. Bacteriol.">
        <title>The genome of the obligately intracellular bacterium Ehrlichia canis reveals themes of complex membrane structure and immune evasion strategies.</title>
        <authorList>
            <person name="Mavromatis K."/>
            <person name="Doyle C.K."/>
            <person name="Lykidis A."/>
            <person name="Ivanova N."/>
            <person name="Francino M.P."/>
            <person name="Chain P."/>
            <person name="Shin M."/>
            <person name="Malfatti S."/>
            <person name="Larimer F."/>
            <person name="Copeland A."/>
            <person name="Detter J.C."/>
            <person name="Land M."/>
            <person name="Richardson P.M."/>
            <person name="Yu X.J."/>
            <person name="Walker D.H."/>
            <person name="McBride J.W."/>
            <person name="Kyrpides N.C."/>
        </authorList>
    </citation>
    <scope>NUCLEOTIDE SEQUENCE [LARGE SCALE GENOMIC DNA]</scope>
    <source>
        <strain>Jake</strain>
    </source>
</reference>
<name>Y351_EHRCJ</name>
<comment type="subcellular location">
    <subcellularLocation>
        <location evidence="1">Cytoplasm</location>
    </subcellularLocation>
</comment>
<comment type="similarity">
    <text evidence="1">Belongs to the TACO1 family.</text>
</comment>
<evidence type="ECO:0000255" key="1">
    <source>
        <dbReference type="HAMAP-Rule" id="MF_00693"/>
    </source>
</evidence>
<evidence type="ECO:0000256" key="2">
    <source>
        <dbReference type="SAM" id="MobiDB-lite"/>
    </source>
</evidence>
<organism>
    <name type="scientific">Ehrlichia canis (strain Jake)</name>
    <dbReference type="NCBI Taxonomy" id="269484"/>
    <lineage>
        <taxon>Bacteria</taxon>
        <taxon>Pseudomonadati</taxon>
        <taxon>Pseudomonadota</taxon>
        <taxon>Alphaproteobacteria</taxon>
        <taxon>Rickettsiales</taxon>
        <taxon>Anaplasmataceae</taxon>
        <taxon>Ehrlichia</taxon>
    </lineage>
</organism>
<protein>
    <recommendedName>
        <fullName evidence="1">Probable transcriptional regulatory protein Ecaj_0351</fullName>
    </recommendedName>
</protein>
<gene>
    <name type="ordered locus">Ecaj_0351</name>
</gene>
<accession>Q3YSB1</accession>